<sequence length="348" mass="36450">MLILGFESSCDETGVALVAADHGERPRLLAHALHSQVAMHEAYGGVVPELASRDHIRRALPLTRQVLAEAGRALADVDVVAYTRGPGLAGALLVGSAVACALAAALDRPVLGIHHLEGHLLSPFLSVDPPQFPFVALLVSGGHTQLMRVDGVGDYALLGETIDDAAGEAFDKSAKLLGLGYPGGPALARLAEFGDPTAYALPRPLLHRDTLDFSFAGLKTAVRTQVLKLGEGVCEQPRADLAAATQAAIVEVLVKKSLAALRATRLQRLVVAGGVGANRSLRSQLDAACAKRGVRVHYPEVSLCTDNGAMIALAAAMRLQAGRATARRDHAFDVQPRWPLAALDVGVP</sequence>
<keyword id="KW-0012">Acyltransferase</keyword>
<keyword id="KW-0963">Cytoplasm</keyword>
<keyword id="KW-0408">Iron</keyword>
<keyword id="KW-0479">Metal-binding</keyword>
<keyword id="KW-1185">Reference proteome</keyword>
<keyword id="KW-0808">Transferase</keyword>
<keyword id="KW-0819">tRNA processing</keyword>
<protein>
    <recommendedName>
        <fullName evidence="1">tRNA N6-adenosine threonylcarbamoyltransferase</fullName>
        <ecNumber evidence="1">2.3.1.234</ecNumber>
    </recommendedName>
    <alternativeName>
        <fullName evidence="1">N6-L-threonylcarbamoyladenine synthase</fullName>
        <shortName evidence="1">t(6)A synthase</shortName>
    </alternativeName>
    <alternativeName>
        <fullName evidence="1">t(6)A37 threonylcarbamoyladenosine biosynthesis protein TsaD</fullName>
    </alternativeName>
    <alternativeName>
        <fullName evidence="1">tRNA threonylcarbamoyladenosine biosynthesis protein TsaD</fullName>
    </alternativeName>
</protein>
<reference key="1">
    <citation type="journal article" date="2007" name="J. Bacteriol.">
        <title>Whole-genome analysis of the methyl tert-butyl ether-degrading beta-proteobacterium Methylibium petroleiphilum PM1.</title>
        <authorList>
            <person name="Kane S.R."/>
            <person name="Chakicherla A.Y."/>
            <person name="Chain P.S.G."/>
            <person name="Schmidt R."/>
            <person name="Shin M.W."/>
            <person name="Legler T.C."/>
            <person name="Scow K.M."/>
            <person name="Larimer F.W."/>
            <person name="Lucas S.M."/>
            <person name="Richardson P.M."/>
            <person name="Hristova K.R."/>
        </authorList>
    </citation>
    <scope>NUCLEOTIDE SEQUENCE [LARGE SCALE GENOMIC DNA]</scope>
    <source>
        <strain>ATCC BAA-1232 / LMG 22953 / PM1</strain>
    </source>
</reference>
<comment type="function">
    <text evidence="1">Required for the formation of a threonylcarbamoyl group on adenosine at position 37 (t(6)A37) in tRNAs that read codons beginning with adenine. Is involved in the transfer of the threonylcarbamoyl moiety of threonylcarbamoyl-AMP (TC-AMP) to the N6 group of A37, together with TsaE and TsaB. TsaD likely plays a direct catalytic role in this reaction.</text>
</comment>
<comment type="catalytic activity">
    <reaction evidence="1">
        <text>L-threonylcarbamoyladenylate + adenosine(37) in tRNA = N(6)-L-threonylcarbamoyladenosine(37) in tRNA + AMP + H(+)</text>
        <dbReference type="Rhea" id="RHEA:37059"/>
        <dbReference type="Rhea" id="RHEA-COMP:10162"/>
        <dbReference type="Rhea" id="RHEA-COMP:10163"/>
        <dbReference type="ChEBI" id="CHEBI:15378"/>
        <dbReference type="ChEBI" id="CHEBI:73682"/>
        <dbReference type="ChEBI" id="CHEBI:74411"/>
        <dbReference type="ChEBI" id="CHEBI:74418"/>
        <dbReference type="ChEBI" id="CHEBI:456215"/>
        <dbReference type="EC" id="2.3.1.234"/>
    </reaction>
</comment>
<comment type="cofactor">
    <cofactor evidence="1">
        <name>Fe(2+)</name>
        <dbReference type="ChEBI" id="CHEBI:29033"/>
    </cofactor>
    <text evidence="1">Binds 1 Fe(2+) ion per subunit.</text>
</comment>
<comment type="subcellular location">
    <subcellularLocation>
        <location evidence="1">Cytoplasm</location>
    </subcellularLocation>
</comment>
<comment type="similarity">
    <text evidence="1">Belongs to the KAE1 / TsaD family.</text>
</comment>
<comment type="sequence caution" evidence="2">
    <conflict type="erroneous initiation">
        <sequence resource="EMBL-CDS" id="ABM94357"/>
    </conflict>
</comment>
<organism>
    <name type="scientific">Methylibium petroleiphilum (strain ATCC BAA-1232 / LMG 22953 / PM1)</name>
    <dbReference type="NCBI Taxonomy" id="420662"/>
    <lineage>
        <taxon>Bacteria</taxon>
        <taxon>Pseudomonadati</taxon>
        <taxon>Pseudomonadota</taxon>
        <taxon>Betaproteobacteria</taxon>
        <taxon>Burkholderiales</taxon>
        <taxon>Sphaerotilaceae</taxon>
        <taxon>Methylibium</taxon>
    </lineage>
</organism>
<accession>A2SFL8</accession>
<feature type="chain" id="PRO_0000303423" description="tRNA N6-adenosine threonylcarbamoyltransferase">
    <location>
        <begin position="1"/>
        <end position="348"/>
    </location>
</feature>
<feature type="binding site" evidence="1">
    <location>
        <position position="115"/>
    </location>
    <ligand>
        <name>Fe cation</name>
        <dbReference type="ChEBI" id="CHEBI:24875"/>
    </ligand>
</feature>
<feature type="binding site" evidence="1">
    <location>
        <position position="119"/>
    </location>
    <ligand>
        <name>Fe cation</name>
        <dbReference type="ChEBI" id="CHEBI:24875"/>
    </ligand>
</feature>
<feature type="binding site" evidence="1">
    <location>
        <begin position="138"/>
        <end position="142"/>
    </location>
    <ligand>
        <name>substrate</name>
    </ligand>
</feature>
<feature type="binding site" evidence="1">
    <location>
        <position position="171"/>
    </location>
    <ligand>
        <name>substrate</name>
    </ligand>
</feature>
<feature type="binding site" evidence="1">
    <location>
        <position position="184"/>
    </location>
    <ligand>
        <name>substrate</name>
    </ligand>
</feature>
<feature type="binding site" evidence="1">
    <location>
        <position position="278"/>
    </location>
    <ligand>
        <name>substrate</name>
    </ligand>
</feature>
<feature type="binding site" evidence="1">
    <location>
        <position position="306"/>
    </location>
    <ligand>
        <name>Fe cation</name>
        <dbReference type="ChEBI" id="CHEBI:24875"/>
    </ligand>
</feature>
<gene>
    <name evidence="1" type="primary">tsaD</name>
    <name type="synonym">gcp</name>
    <name type="ordered locus">Mpe_A1395</name>
</gene>
<proteinExistence type="inferred from homology"/>
<dbReference type="EC" id="2.3.1.234" evidence="1"/>
<dbReference type="EMBL" id="CP000555">
    <property type="protein sequence ID" value="ABM94357.1"/>
    <property type="status" value="ALT_INIT"/>
    <property type="molecule type" value="Genomic_DNA"/>
</dbReference>
<dbReference type="RefSeq" id="WP_036230548.1">
    <property type="nucleotide sequence ID" value="NC_008825.1"/>
</dbReference>
<dbReference type="SMR" id="A2SFL8"/>
<dbReference type="STRING" id="420662.Mpe_A1395"/>
<dbReference type="KEGG" id="mpt:Mpe_A1395"/>
<dbReference type="eggNOG" id="COG0533">
    <property type="taxonomic scope" value="Bacteria"/>
</dbReference>
<dbReference type="HOGENOM" id="CLU_023208_0_2_4"/>
<dbReference type="Proteomes" id="UP000000366">
    <property type="component" value="Chromosome"/>
</dbReference>
<dbReference type="GO" id="GO:0005737">
    <property type="term" value="C:cytoplasm"/>
    <property type="evidence" value="ECO:0007669"/>
    <property type="project" value="UniProtKB-SubCell"/>
</dbReference>
<dbReference type="GO" id="GO:0005506">
    <property type="term" value="F:iron ion binding"/>
    <property type="evidence" value="ECO:0007669"/>
    <property type="project" value="UniProtKB-UniRule"/>
</dbReference>
<dbReference type="GO" id="GO:0061711">
    <property type="term" value="F:N(6)-L-threonylcarbamoyladenine synthase activity"/>
    <property type="evidence" value="ECO:0007669"/>
    <property type="project" value="UniProtKB-EC"/>
</dbReference>
<dbReference type="GO" id="GO:0002949">
    <property type="term" value="P:tRNA threonylcarbamoyladenosine modification"/>
    <property type="evidence" value="ECO:0007669"/>
    <property type="project" value="UniProtKB-UniRule"/>
</dbReference>
<dbReference type="CDD" id="cd24133">
    <property type="entry name" value="ASKHA_NBD_TsaD_bac"/>
    <property type="match status" value="1"/>
</dbReference>
<dbReference type="FunFam" id="3.30.420.40:FF:000012">
    <property type="entry name" value="tRNA N6-adenosine threonylcarbamoyltransferase"/>
    <property type="match status" value="1"/>
</dbReference>
<dbReference type="FunFam" id="3.30.420.40:FF:000040">
    <property type="entry name" value="tRNA N6-adenosine threonylcarbamoyltransferase"/>
    <property type="match status" value="1"/>
</dbReference>
<dbReference type="Gene3D" id="3.30.420.40">
    <property type="match status" value="2"/>
</dbReference>
<dbReference type="HAMAP" id="MF_01445">
    <property type="entry name" value="TsaD"/>
    <property type="match status" value="1"/>
</dbReference>
<dbReference type="InterPro" id="IPR043129">
    <property type="entry name" value="ATPase_NBD"/>
</dbReference>
<dbReference type="InterPro" id="IPR000905">
    <property type="entry name" value="Gcp-like_dom"/>
</dbReference>
<dbReference type="InterPro" id="IPR017861">
    <property type="entry name" value="KAE1/TsaD"/>
</dbReference>
<dbReference type="InterPro" id="IPR017860">
    <property type="entry name" value="Peptidase_M22_CS"/>
</dbReference>
<dbReference type="InterPro" id="IPR022450">
    <property type="entry name" value="TsaD"/>
</dbReference>
<dbReference type="NCBIfam" id="TIGR00329">
    <property type="entry name" value="gcp_kae1"/>
    <property type="match status" value="1"/>
</dbReference>
<dbReference type="NCBIfam" id="TIGR03723">
    <property type="entry name" value="T6A_TsaD_YgjD"/>
    <property type="match status" value="1"/>
</dbReference>
<dbReference type="PANTHER" id="PTHR11735">
    <property type="entry name" value="TRNA N6-ADENOSINE THREONYLCARBAMOYLTRANSFERASE"/>
    <property type="match status" value="1"/>
</dbReference>
<dbReference type="PANTHER" id="PTHR11735:SF6">
    <property type="entry name" value="TRNA N6-ADENOSINE THREONYLCARBAMOYLTRANSFERASE, MITOCHONDRIAL"/>
    <property type="match status" value="1"/>
</dbReference>
<dbReference type="Pfam" id="PF00814">
    <property type="entry name" value="TsaD"/>
    <property type="match status" value="1"/>
</dbReference>
<dbReference type="PRINTS" id="PR00789">
    <property type="entry name" value="OSIALOPTASE"/>
</dbReference>
<dbReference type="SUPFAM" id="SSF53067">
    <property type="entry name" value="Actin-like ATPase domain"/>
    <property type="match status" value="2"/>
</dbReference>
<dbReference type="PROSITE" id="PS01016">
    <property type="entry name" value="GLYCOPROTEASE"/>
    <property type="match status" value="1"/>
</dbReference>
<evidence type="ECO:0000255" key="1">
    <source>
        <dbReference type="HAMAP-Rule" id="MF_01445"/>
    </source>
</evidence>
<evidence type="ECO:0000305" key="2"/>
<name>TSAD_METPP</name>